<accession>Q83A95</accession>
<dbReference type="EC" id="3.4.25.2" evidence="1"/>
<dbReference type="EMBL" id="AE016828">
    <property type="protein sequence ID" value="AAO91500.2"/>
    <property type="status" value="ALT_INIT"/>
    <property type="molecule type" value="Genomic_DNA"/>
</dbReference>
<dbReference type="RefSeq" id="NP_820986.2">
    <property type="nucleotide sequence ID" value="NC_002971.3"/>
</dbReference>
<dbReference type="RefSeq" id="WP_005769770.1">
    <property type="nucleotide sequence ID" value="NZ_CDBG01000001.1"/>
</dbReference>
<dbReference type="RefSeq" id="WP_010958598.1">
    <property type="nucleotide sequence ID" value="NC_002971.4"/>
</dbReference>
<dbReference type="SMR" id="Q83A95"/>
<dbReference type="STRING" id="227377.CBU_2011"/>
<dbReference type="MEROPS" id="T01.006"/>
<dbReference type="EnsemblBacteria" id="AAO91500">
    <property type="protein sequence ID" value="AAO91500"/>
    <property type="gene ID" value="CBU_2011"/>
</dbReference>
<dbReference type="GeneID" id="1209924"/>
<dbReference type="KEGG" id="cbu:CBU_2011"/>
<dbReference type="PATRIC" id="fig|227377.7.peg.2000"/>
<dbReference type="eggNOG" id="COG5405">
    <property type="taxonomic scope" value="Bacteria"/>
</dbReference>
<dbReference type="HOGENOM" id="CLU_093872_1_0_6"/>
<dbReference type="OrthoDB" id="9804884at2"/>
<dbReference type="Proteomes" id="UP000002671">
    <property type="component" value="Chromosome"/>
</dbReference>
<dbReference type="GO" id="GO:0005737">
    <property type="term" value="C:cytoplasm"/>
    <property type="evidence" value="ECO:0000318"/>
    <property type="project" value="GO_Central"/>
</dbReference>
<dbReference type="GO" id="GO:0009376">
    <property type="term" value="C:HslUV protease complex"/>
    <property type="evidence" value="ECO:0007669"/>
    <property type="project" value="UniProtKB-UniRule"/>
</dbReference>
<dbReference type="GO" id="GO:0005839">
    <property type="term" value="C:proteasome core complex"/>
    <property type="evidence" value="ECO:0007669"/>
    <property type="project" value="InterPro"/>
</dbReference>
<dbReference type="GO" id="GO:0046872">
    <property type="term" value="F:metal ion binding"/>
    <property type="evidence" value="ECO:0007669"/>
    <property type="project" value="UniProtKB-KW"/>
</dbReference>
<dbReference type="GO" id="GO:0004298">
    <property type="term" value="F:threonine-type endopeptidase activity"/>
    <property type="evidence" value="ECO:0007669"/>
    <property type="project" value="UniProtKB-KW"/>
</dbReference>
<dbReference type="GO" id="GO:0051603">
    <property type="term" value="P:proteolysis involved in protein catabolic process"/>
    <property type="evidence" value="ECO:0000318"/>
    <property type="project" value="GO_Central"/>
</dbReference>
<dbReference type="CDD" id="cd01913">
    <property type="entry name" value="protease_HslV"/>
    <property type="match status" value="1"/>
</dbReference>
<dbReference type="FunFam" id="3.60.20.10:FF:000002">
    <property type="entry name" value="ATP-dependent protease subunit HslV"/>
    <property type="match status" value="1"/>
</dbReference>
<dbReference type="Gene3D" id="3.60.20.10">
    <property type="entry name" value="Glutamine Phosphoribosylpyrophosphate, subunit 1, domain 1"/>
    <property type="match status" value="1"/>
</dbReference>
<dbReference type="HAMAP" id="MF_00248">
    <property type="entry name" value="HslV"/>
    <property type="match status" value="1"/>
</dbReference>
<dbReference type="InterPro" id="IPR022281">
    <property type="entry name" value="ATP-dep_Prtase_HsIV_su"/>
</dbReference>
<dbReference type="InterPro" id="IPR029055">
    <property type="entry name" value="Ntn_hydrolases_N"/>
</dbReference>
<dbReference type="InterPro" id="IPR001353">
    <property type="entry name" value="Proteasome_sua/b"/>
</dbReference>
<dbReference type="InterPro" id="IPR023333">
    <property type="entry name" value="Proteasome_suB-type"/>
</dbReference>
<dbReference type="NCBIfam" id="TIGR03692">
    <property type="entry name" value="ATP_dep_HslV"/>
    <property type="match status" value="1"/>
</dbReference>
<dbReference type="NCBIfam" id="NF003964">
    <property type="entry name" value="PRK05456.1"/>
    <property type="match status" value="1"/>
</dbReference>
<dbReference type="PANTHER" id="PTHR32194:SF0">
    <property type="entry name" value="ATP-DEPENDENT PROTEASE SUBUNIT HSLV"/>
    <property type="match status" value="1"/>
</dbReference>
<dbReference type="PANTHER" id="PTHR32194">
    <property type="entry name" value="METALLOPROTEASE TLDD"/>
    <property type="match status" value="1"/>
</dbReference>
<dbReference type="Pfam" id="PF00227">
    <property type="entry name" value="Proteasome"/>
    <property type="match status" value="1"/>
</dbReference>
<dbReference type="PIRSF" id="PIRSF039093">
    <property type="entry name" value="HslV"/>
    <property type="match status" value="1"/>
</dbReference>
<dbReference type="SUPFAM" id="SSF56235">
    <property type="entry name" value="N-terminal nucleophile aminohydrolases (Ntn hydrolases)"/>
    <property type="match status" value="1"/>
</dbReference>
<dbReference type="PROSITE" id="PS51476">
    <property type="entry name" value="PROTEASOME_BETA_2"/>
    <property type="match status" value="1"/>
</dbReference>
<evidence type="ECO:0000255" key="1">
    <source>
        <dbReference type="HAMAP-Rule" id="MF_00248"/>
    </source>
</evidence>
<evidence type="ECO:0000305" key="2"/>
<name>HSLV_COXBU</name>
<reference key="1">
    <citation type="journal article" date="2003" name="Proc. Natl. Acad. Sci. U.S.A.">
        <title>Complete genome sequence of the Q-fever pathogen, Coxiella burnetii.</title>
        <authorList>
            <person name="Seshadri R."/>
            <person name="Paulsen I.T."/>
            <person name="Eisen J.A."/>
            <person name="Read T.D."/>
            <person name="Nelson K.E."/>
            <person name="Nelson W.C."/>
            <person name="Ward N.L."/>
            <person name="Tettelin H."/>
            <person name="Davidsen T.M."/>
            <person name="Beanan M.J."/>
            <person name="DeBoy R.T."/>
            <person name="Daugherty S.C."/>
            <person name="Brinkac L.M."/>
            <person name="Madupu R."/>
            <person name="Dodson R.J."/>
            <person name="Khouri H.M."/>
            <person name="Lee K.H."/>
            <person name="Carty H.A."/>
            <person name="Scanlan D."/>
            <person name="Heinzen R.A."/>
            <person name="Thompson H.A."/>
            <person name="Samuel J.E."/>
            <person name="Fraser C.M."/>
            <person name="Heidelberg J.F."/>
        </authorList>
    </citation>
    <scope>NUCLEOTIDE SEQUENCE [LARGE SCALE GENOMIC DNA]</scope>
    <source>
        <strain>RSA 493 / Nine Mile phase I</strain>
    </source>
</reference>
<proteinExistence type="inferred from homology"/>
<organism>
    <name type="scientific">Coxiella burnetii (strain RSA 493 / Nine Mile phase I)</name>
    <dbReference type="NCBI Taxonomy" id="227377"/>
    <lineage>
        <taxon>Bacteria</taxon>
        <taxon>Pseudomonadati</taxon>
        <taxon>Pseudomonadota</taxon>
        <taxon>Gammaproteobacteria</taxon>
        <taxon>Legionellales</taxon>
        <taxon>Coxiellaceae</taxon>
        <taxon>Coxiella</taxon>
    </lineage>
</organism>
<sequence length="181" mass="19551">MEQFRGTTILSVRRNGKVVIGGDGQVSMGSTIMKANARKVRRLYNGKVIAGFAGGTADAFTLFERFESKLEKHSGNLTRAAVELAKDWRTDRILRRLEALLTVADSKASLIITGLGDVIEPEQSLMAIGSGGSFAQAAAKALLENTKLSARKIVEKALTIAADICIYTNLNFTIEELDSES</sequence>
<protein>
    <recommendedName>
        <fullName evidence="1">ATP-dependent protease subunit HslV</fullName>
        <ecNumber evidence="1">3.4.25.2</ecNumber>
    </recommendedName>
</protein>
<comment type="function">
    <text evidence="1">Protease subunit of a proteasome-like degradation complex believed to be a general protein degrading machinery.</text>
</comment>
<comment type="catalytic activity">
    <reaction evidence="1">
        <text>ATP-dependent cleavage of peptide bonds with broad specificity.</text>
        <dbReference type="EC" id="3.4.25.2"/>
    </reaction>
</comment>
<comment type="activity regulation">
    <text evidence="1">Allosterically activated by HslU binding.</text>
</comment>
<comment type="subunit">
    <text evidence="1">A double ring-shaped homohexamer of HslV is capped on each side by a ring-shaped HslU homohexamer. The assembly of the HslU/HslV complex is dependent on binding of ATP.</text>
</comment>
<comment type="subcellular location">
    <subcellularLocation>
        <location evidence="1">Cytoplasm</location>
    </subcellularLocation>
</comment>
<comment type="similarity">
    <text evidence="1">Belongs to the peptidase T1B family. HslV subfamily.</text>
</comment>
<comment type="sequence caution" evidence="2">
    <conflict type="erroneous initiation">
        <sequence resource="EMBL-CDS" id="AAO91500"/>
    </conflict>
</comment>
<gene>
    <name evidence="1" type="primary">hslV</name>
    <name type="ordered locus">CBU_2011</name>
</gene>
<keyword id="KW-0021">Allosteric enzyme</keyword>
<keyword id="KW-0963">Cytoplasm</keyword>
<keyword id="KW-0378">Hydrolase</keyword>
<keyword id="KW-0479">Metal-binding</keyword>
<keyword id="KW-0645">Protease</keyword>
<keyword id="KW-1185">Reference proteome</keyword>
<keyword id="KW-0915">Sodium</keyword>
<keyword id="KW-0888">Threonine protease</keyword>
<feature type="chain" id="PRO_0000148103" description="ATP-dependent protease subunit HslV">
    <location>
        <begin position="1"/>
        <end position="181"/>
    </location>
</feature>
<feature type="active site" evidence="1">
    <location>
        <position position="7"/>
    </location>
</feature>
<feature type="binding site" evidence="1">
    <location>
        <position position="162"/>
    </location>
    <ligand>
        <name>Na(+)</name>
        <dbReference type="ChEBI" id="CHEBI:29101"/>
    </ligand>
</feature>
<feature type="binding site" evidence="1">
    <location>
        <position position="165"/>
    </location>
    <ligand>
        <name>Na(+)</name>
        <dbReference type="ChEBI" id="CHEBI:29101"/>
    </ligand>
</feature>
<feature type="binding site" evidence="1">
    <location>
        <position position="168"/>
    </location>
    <ligand>
        <name>Na(+)</name>
        <dbReference type="ChEBI" id="CHEBI:29101"/>
    </ligand>
</feature>